<evidence type="ECO:0000255" key="1">
    <source>
        <dbReference type="HAMAP-Rule" id="MF_00147"/>
    </source>
</evidence>
<evidence type="ECO:0000269" key="2">
    <source>
    </source>
</evidence>
<evidence type="ECO:0000269" key="3">
    <source>
    </source>
</evidence>
<evidence type="ECO:0000269" key="4">
    <source>
    </source>
</evidence>
<evidence type="ECO:0000303" key="5">
    <source>
    </source>
</evidence>
<evidence type="ECO:0000305" key="6">
    <source>
    </source>
</evidence>
<evidence type="ECO:0007829" key="7">
    <source>
        <dbReference type="PDB" id="3M9Y"/>
    </source>
</evidence>
<evidence type="ECO:0007829" key="8">
    <source>
        <dbReference type="PDB" id="3UWV"/>
    </source>
</evidence>
<proteinExistence type="evidence at protein level"/>
<dbReference type="EC" id="5.3.1.1" evidence="1"/>
<dbReference type="EMBL" id="BX571856">
    <property type="protein sequence ID" value="CAG39839.1"/>
    <property type="molecule type" value="Genomic_DNA"/>
</dbReference>
<dbReference type="RefSeq" id="WP_001260089.1">
    <property type="nucleotide sequence ID" value="NC_002952.2"/>
</dbReference>
<dbReference type="PDB" id="3M9Y">
    <property type="method" value="X-ray"/>
    <property type="resolution" value="1.90 A"/>
    <property type="chains" value="A/B=1-253"/>
</dbReference>
<dbReference type="PDB" id="3UWU">
    <property type="method" value="X-ray"/>
    <property type="resolution" value="2.15 A"/>
    <property type="chains" value="A/B=1-253"/>
</dbReference>
<dbReference type="PDB" id="3UWV">
    <property type="method" value="X-ray"/>
    <property type="resolution" value="2.07 A"/>
    <property type="chains" value="A/B=1-253"/>
</dbReference>
<dbReference type="PDB" id="3UWW">
    <property type="method" value="X-ray"/>
    <property type="resolution" value="2.25 A"/>
    <property type="chains" value="A/B=1-253"/>
</dbReference>
<dbReference type="PDB" id="3UWY">
    <property type="method" value="X-ray"/>
    <property type="resolution" value="2.40 A"/>
    <property type="chains" value="A/B=1-253"/>
</dbReference>
<dbReference type="PDB" id="3UWZ">
    <property type="method" value="X-ray"/>
    <property type="resolution" value="2.50 A"/>
    <property type="chains" value="A/B=1-253"/>
</dbReference>
<dbReference type="PDBsum" id="3M9Y"/>
<dbReference type="PDBsum" id="3UWU"/>
<dbReference type="PDBsum" id="3UWV"/>
<dbReference type="PDBsum" id="3UWW"/>
<dbReference type="PDBsum" id="3UWY"/>
<dbReference type="PDBsum" id="3UWZ"/>
<dbReference type="SMR" id="Q6GIL6"/>
<dbReference type="MoonProt" id="Q6GIL6"/>
<dbReference type="KEGG" id="sar:SAR0830"/>
<dbReference type="HOGENOM" id="CLU_024251_2_3_9"/>
<dbReference type="BRENDA" id="5.3.1.1">
    <property type="organism ID" value="3352"/>
</dbReference>
<dbReference type="UniPathway" id="UPA00109">
    <property type="reaction ID" value="UER00189"/>
</dbReference>
<dbReference type="UniPathway" id="UPA00138"/>
<dbReference type="EvolutionaryTrace" id="Q6GIL6"/>
<dbReference type="Proteomes" id="UP000000596">
    <property type="component" value="Chromosome"/>
</dbReference>
<dbReference type="GO" id="GO:0005829">
    <property type="term" value="C:cytosol"/>
    <property type="evidence" value="ECO:0007669"/>
    <property type="project" value="TreeGrafter"/>
</dbReference>
<dbReference type="GO" id="GO:0004807">
    <property type="term" value="F:triose-phosphate isomerase activity"/>
    <property type="evidence" value="ECO:0007669"/>
    <property type="project" value="UniProtKB-UniRule"/>
</dbReference>
<dbReference type="GO" id="GO:0006094">
    <property type="term" value="P:gluconeogenesis"/>
    <property type="evidence" value="ECO:0007669"/>
    <property type="project" value="UniProtKB-UniRule"/>
</dbReference>
<dbReference type="GO" id="GO:0046166">
    <property type="term" value="P:glyceraldehyde-3-phosphate biosynthetic process"/>
    <property type="evidence" value="ECO:0007669"/>
    <property type="project" value="TreeGrafter"/>
</dbReference>
<dbReference type="GO" id="GO:0019563">
    <property type="term" value="P:glycerol catabolic process"/>
    <property type="evidence" value="ECO:0007669"/>
    <property type="project" value="TreeGrafter"/>
</dbReference>
<dbReference type="GO" id="GO:0006096">
    <property type="term" value="P:glycolytic process"/>
    <property type="evidence" value="ECO:0007669"/>
    <property type="project" value="UniProtKB-UniRule"/>
</dbReference>
<dbReference type="CDD" id="cd00311">
    <property type="entry name" value="TIM"/>
    <property type="match status" value="1"/>
</dbReference>
<dbReference type="FunFam" id="3.20.20.70:FF:000016">
    <property type="entry name" value="Triosephosphate isomerase"/>
    <property type="match status" value="1"/>
</dbReference>
<dbReference type="Gene3D" id="3.20.20.70">
    <property type="entry name" value="Aldolase class I"/>
    <property type="match status" value="1"/>
</dbReference>
<dbReference type="HAMAP" id="MF_00147_B">
    <property type="entry name" value="TIM_B"/>
    <property type="match status" value="1"/>
</dbReference>
<dbReference type="InterPro" id="IPR013785">
    <property type="entry name" value="Aldolase_TIM"/>
</dbReference>
<dbReference type="InterPro" id="IPR035990">
    <property type="entry name" value="TIM_sf"/>
</dbReference>
<dbReference type="InterPro" id="IPR022896">
    <property type="entry name" value="TrioseP_Isoase_bac/euk"/>
</dbReference>
<dbReference type="InterPro" id="IPR000652">
    <property type="entry name" value="Triosephosphate_isomerase"/>
</dbReference>
<dbReference type="InterPro" id="IPR020861">
    <property type="entry name" value="Triosephosphate_isomerase_AS"/>
</dbReference>
<dbReference type="NCBIfam" id="TIGR00419">
    <property type="entry name" value="tim"/>
    <property type="match status" value="1"/>
</dbReference>
<dbReference type="PANTHER" id="PTHR21139">
    <property type="entry name" value="TRIOSEPHOSPHATE ISOMERASE"/>
    <property type="match status" value="1"/>
</dbReference>
<dbReference type="PANTHER" id="PTHR21139:SF42">
    <property type="entry name" value="TRIOSEPHOSPHATE ISOMERASE"/>
    <property type="match status" value="1"/>
</dbReference>
<dbReference type="Pfam" id="PF00121">
    <property type="entry name" value="TIM"/>
    <property type="match status" value="1"/>
</dbReference>
<dbReference type="SUPFAM" id="SSF51351">
    <property type="entry name" value="Triosephosphate isomerase (TIM)"/>
    <property type="match status" value="1"/>
</dbReference>
<dbReference type="PROSITE" id="PS00171">
    <property type="entry name" value="TIM_1"/>
    <property type="match status" value="1"/>
</dbReference>
<dbReference type="PROSITE" id="PS51440">
    <property type="entry name" value="TIM_2"/>
    <property type="match status" value="1"/>
</dbReference>
<sequence length="253" mass="27262">MRTPIIAGNWKMNKTVQEAKDFVNALPTLPDSKEVESVICAPAIQLDALTTAVKEGKAQGLEIGAQNTYFEDNGAFTGETSPVALADLGVKYVVIGHSERRELFHETDEEINKKAHAIFKHGMTPIICVGETDEERESGKANDVVGEQVKKAVAGLSEDQLKSVVIAYEPIWAIGTGKSSTSEDANEMCAFVRQTIADLSSKEVSEATRIQYGGSVKPNNIKEYMAQTDIDGALVGGASLKVEDFVQLLEGAK</sequence>
<organism>
    <name type="scientific">Staphylococcus aureus (strain MRSA252)</name>
    <dbReference type="NCBI Taxonomy" id="282458"/>
    <lineage>
        <taxon>Bacteria</taxon>
        <taxon>Bacillati</taxon>
        <taxon>Bacillota</taxon>
        <taxon>Bacilli</taxon>
        <taxon>Bacillales</taxon>
        <taxon>Staphylococcaceae</taxon>
        <taxon>Staphylococcus</taxon>
    </lineage>
</organism>
<comment type="function">
    <text evidence="2 3">Involved in biofilm formation (PubMed:11425708). It also plays an instrumental role in adherence and invasion of the bacteria into the host cell (PubMed:22003920). Catalyzes stereospecifically the conversion of dihydroxyacetone phosphate (DHAP) to D-glyceraldehyde-3-phosphate (G3P). It binds plasminogen.</text>
</comment>
<comment type="catalytic activity">
    <reaction evidence="1">
        <text>D-glyceraldehyde 3-phosphate = dihydroxyacetone phosphate</text>
        <dbReference type="Rhea" id="RHEA:18585"/>
        <dbReference type="ChEBI" id="CHEBI:57642"/>
        <dbReference type="ChEBI" id="CHEBI:59776"/>
        <dbReference type="EC" id="5.3.1.1"/>
    </reaction>
</comment>
<comment type="pathway">
    <text evidence="1">Carbohydrate biosynthesis; gluconeogenesis.</text>
</comment>
<comment type="pathway">
    <text evidence="1">Carbohydrate degradation; glycolysis; D-glyceraldehyde 3-phosphate from glycerone phosphate: step 1/1.</text>
</comment>
<comment type="subunit">
    <text evidence="1 4">Homodimer.</text>
</comment>
<comment type="subcellular location">
    <subcellularLocation>
        <location evidence="1">Cytoplasm</location>
    </subcellularLocation>
</comment>
<comment type="similarity">
    <text evidence="1">Belongs to the triosephosphate isomerase family.</text>
</comment>
<reference key="1">
    <citation type="journal article" date="2004" name="Proc. Natl. Acad. Sci. U.S.A.">
        <title>Complete genomes of two clinical Staphylococcus aureus strains: evidence for the rapid evolution of virulence and drug resistance.</title>
        <authorList>
            <person name="Holden M.T.G."/>
            <person name="Feil E.J."/>
            <person name="Lindsay J.A."/>
            <person name="Peacock S.J."/>
            <person name="Day N.P.J."/>
            <person name="Enright M.C."/>
            <person name="Foster T.J."/>
            <person name="Moore C.E."/>
            <person name="Hurst L."/>
            <person name="Atkin R."/>
            <person name="Barron A."/>
            <person name="Bason N."/>
            <person name="Bentley S.D."/>
            <person name="Chillingworth C."/>
            <person name="Chillingworth T."/>
            <person name="Churcher C."/>
            <person name="Clark L."/>
            <person name="Corton C."/>
            <person name="Cronin A."/>
            <person name="Doggett J."/>
            <person name="Dowd L."/>
            <person name="Feltwell T."/>
            <person name="Hance Z."/>
            <person name="Harris B."/>
            <person name="Hauser H."/>
            <person name="Holroyd S."/>
            <person name="Jagels K."/>
            <person name="James K.D."/>
            <person name="Lennard N."/>
            <person name="Line A."/>
            <person name="Mayes R."/>
            <person name="Moule S."/>
            <person name="Mungall K."/>
            <person name="Ormond D."/>
            <person name="Quail M.A."/>
            <person name="Rabbinowitsch E."/>
            <person name="Rutherford K.M."/>
            <person name="Sanders M."/>
            <person name="Sharp S."/>
            <person name="Simmonds M."/>
            <person name="Stevens K."/>
            <person name="Whitehead S."/>
            <person name="Barrell B.G."/>
            <person name="Spratt B.G."/>
            <person name="Parkhill J."/>
        </authorList>
    </citation>
    <scope>NUCLEOTIDE SEQUENCE [LARGE SCALE GENOMIC DNA]</scope>
    <source>
        <strain>MRSA252</strain>
    </source>
</reference>
<reference key="2">
    <citation type="journal article" date="2001" name="Appl. Environ. Microbiol.">
        <title>Detection of differential gene expression in biofilm-forming versus planktonic populations of Staphylococcus aureus using micro-representational-difference analysis.</title>
        <authorList>
            <person name="Becker P."/>
            <person name="Hufnagle W."/>
            <person name="Peters G."/>
            <person name="Herrmann M."/>
        </authorList>
    </citation>
    <scope>FUNCTION</scope>
</reference>
<reference key="3">
    <citation type="journal article" date="2011" name="Microbiol. Immunol.">
        <title>Interaction of triosephosphate isomerase from Staphylococcus aureus with plasminogen.</title>
        <authorList>
            <person name="Furuya H."/>
            <person name="Ikeda R."/>
        </authorList>
    </citation>
    <scope>FUNCTION</scope>
</reference>
<reference key="4">
    <citation type="journal article" date="2012" name="Biochimie">
        <title>Crystal structures of triosephosphate isomerase from methicillin resistant Staphylococcus aureus MRSA252 provide structural insights into novel modes of ligand binding and unique conformations of catalytic loop.</title>
        <authorList>
            <person name="Mukherjee S."/>
            <person name="Roychowdhury A."/>
            <person name="Dutta D."/>
            <person name="Das A.K."/>
        </authorList>
    </citation>
    <scope>X-RAY CRYSTALLOGRAPHY (1.90 ANGSTROMS) IN COMPLEX WITH SUBSTRATE AND SUBSTRATE ANALOGS</scope>
    <scope>SUBUNIT</scope>
</reference>
<protein>
    <recommendedName>
        <fullName evidence="1 5">Triosephosphate isomerase</fullName>
        <shortName evidence="1 5">TIM</shortName>
        <shortName evidence="1 5">TPI</shortName>
        <ecNumber evidence="1">5.3.1.1</ecNumber>
    </recommendedName>
    <alternativeName>
        <fullName evidence="1">Triose-phosphate isomerase</fullName>
    </alternativeName>
</protein>
<feature type="chain" id="PRO_0000090286" description="Triosephosphate isomerase">
    <location>
        <begin position="1"/>
        <end position="253"/>
    </location>
</feature>
<feature type="active site" description="Electrophile" evidence="1 6">
    <location>
        <position position="97"/>
    </location>
</feature>
<feature type="active site" description="Proton acceptor" evidence="1 6">
    <location>
        <position position="169"/>
    </location>
</feature>
<feature type="binding site" evidence="1 4">
    <location>
        <begin position="9"/>
        <end position="11"/>
    </location>
    <ligand>
        <name>substrate</name>
    </ligand>
</feature>
<feature type="binding site" evidence="1 4">
    <location>
        <position position="175"/>
    </location>
    <ligand>
        <name>substrate</name>
    </ligand>
</feature>
<feature type="binding site" evidence="1 4">
    <location>
        <position position="215"/>
    </location>
    <ligand>
        <name>substrate</name>
    </ligand>
</feature>
<feature type="binding site" evidence="1 4">
    <location>
        <begin position="236"/>
        <end position="237"/>
    </location>
    <ligand>
        <name>substrate</name>
    </ligand>
</feature>
<feature type="strand" evidence="7">
    <location>
        <begin position="5"/>
        <end position="9"/>
    </location>
</feature>
<feature type="helix" evidence="7">
    <location>
        <begin position="16"/>
        <end position="25"/>
    </location>
</feature>
<feature type="turn" evidence="7">
    <location>
        <begin position="32"/>
        <end position="34"/>
    </location>
</feature>
<feature type="strand" evidence="7">
    <location>
        <begin position="36"/>
        <end position="41"/>
    </location>
</feature>
<feature type="helix" evidence="7">
    <location>
        <begin position="43"/>
        <end position="45"/>
    </location>
</feature>
<feature type="helix" evidence="7">
    <location>
        <begin position="46"/>
        <end position="54"/>
    </location>
</feature>
<feature type="turn" evidence="8">
    <location>
        <begin position="55"/>
        <end position="60"/>
    </location>
</feature>
<feature type="strand" evidence="7">
    <location>
        <begin position="62"/>
        <end position="66"/>
    </location>
</feature>
<feature type="strand" evidence="7">
    <location>
        <begin position="70"/>
        <end position="75"/>
    </location>
</feature>
<feature type="helix" evidence="7">
    <location>
        <begin position="82"/>
        <end position="87"/>
    </location>
</feature>
<feature type="strand" evidence="7">
    <location>
        <begin position="92"/>
        <end position="96"/>
    </location>
</feature>
<feature type="helix" evidence="7">
    <location>
        <begin position="98"/>
        <end position="103"/>
    </location>
</feature>
<feature type="helix" evidence="7">
    <location>
        <begin position="108"/>
        <end position="120"/>
    </location>
</feature>
<feature type="strand" evidence="7">
    <location>
        <begin position="124"/>
        <end position="129"/>
    </location>
</feature>
<feature type="helix" evidence="7">
    <location>
        <begin position="133"/>
        <end position="137"/>
    </location>
</feature>
<feature type="helix" evidence="7">
    <location>
        <begin position="141"/>
        <end position="153"/>
    </location>
</feature>
<feature type="helix" evidence="7">
    <location>
        <begin position="158"/>
        <end position="163"/>
    </location>
</feature>
<feature type="strand" evidence="7">
    <location>
        <begin position="165"/>
        <end position="168"/>
    </location>
</feature>
<feature type="helix" evidence="7">
    <location>
        <begin position="171"/>
        <end position="173"/>
    </location>
</feature>
<feature type="strand" evidence="8">
    <location>
        <begin position="174"/>
        <end position="177"/>
    </location>
</feature>
<feature type="helix" evidence="7">
    <location>
        <begin position="182"/>
        <end position="199"/>
    </location>
</feature>
<feature type="helix" evidence="7">
    <location>
        <begin position="202"/>
        <end position="205"/>
    </location>
</feature>
<feature type="strand" evidence="7">
    <location>
        <begin position="208"/>
        <end position="212"/>
    </location>
</feature>
<feature type="turn" evidence="7">
    <location>
        <begin position="218"/>
        <end position="220"/>
    </location>
</feature>
<feature type="helix" evidence="7">
    <location>
        <begin position="221"/>
        <end position="225"/>
    </location>
</feature>
<feature type="strand" evidence="7">
    <location>
        <begin position="232"/>
        <end position="236"/>
    </location>
</feature>
<feature type="helix" evidence="7">
    <location>
        <begin position="237"/>
        <end position="239"/>
    </location>
</feature>
<feature type="helix" evidence="7">
    <location>
        <begin position="242"/>
        <end position="252"/>
    </location>
</feature>
<gene>
    <name evidence="1" type="primary">tpiA</name>
    <name type="synonym">tpi</name>
    <name type="ordered locus">SAR0830</name>
</gene>
<accession>Q6GIL6</accession>
<keyword id="KW-0002">3D-structure</keyword>
<keyword id="KW-0963">Cytoplasm</keyword>
<keyword id="KW-0312">Gluconeogenesis</keyword>
<keyword id="KW-0324">Glycolysis</keyword>
<keyword id="KW-0413">Isomerase</keyword>
<keyword id="KW-0843">Virulence</keyword>
<name>TPIS_STAAR</name>